<proteinExistence type="evidence at transcript level"/>
<sequence>MSEVLRRANNALSSVKQYQSLLNHFAATQSISKTKALHCHVITGGRVSGHILSTLSVTYALCGHITYARKLFEEMPQSSLLSYNIVIRMYVREGLYHDAISVFIRMVSEGVKCVPDGYTYPFVAKAAGELKSMKLGLVVHGRILRSWFGRDKYVQNALLAMYMNFGKVEMARDVFDVMKNRDVISWNTMISGYYRNGYMNDALMMFDWMVNESVDLDHATIVSMLPVCGHLKDLEMGRNVHKLVEEKRLGDKIEVKNALVNMYLKCGRMDEARFVFDRMERRDVITWTCMINGYTEDGDVENALELCRLMQFEGVRPNAVTIASLVSVCGDALKVNDGKCLHGWAVRQQVYSDIIIETSLISMYAKCKRVDLCFRVFSGASKYHTGPWSAIIAGCVQNELVSDALGLFKRMRREDVEPNIATLNSLLPAYAALADLRQAMNIHCYLTKTGFMSSLDAATGLVHVYSKCGTLESAHKIFNGIQEKHKSKDVVLWGALISGYGMHGDGHNALQVFMEMVRSGVTPNEITFTSALNACSHSGLVEEGLTLFRFMLEHYKTLARSNHYTCIVDLLGRAGRLDEAYNLITTIPFEPTSTVWGALLAACVTHENVQLGEMAANKLFELEPENTGNYVLLANIYAALGRWKDMEKVRSMMENVGLRKKPGHSTIEIRSNSVDTR</sequence>
<evidence type="ECO:0000305" key="1"/>
<gene>
    <name type="primary">PCMP-E16</name>
    <name type="ordered locus">At5g39350</name>
    <name type="ORF">MUL8.30</name>
</gene>
<reference key="1">
    <citation type="journal article" date="1998" name="DNA Res.">
        <title>Structural analysis of Arabidopsis thaliana chromosome 5. IV. Sequence features of the regions of 1,456,315 bp covered by nineteen physically assigned P1 and TAC clones.</title>
        <authorList>
            <person name="Sato S."/>
            <person name="Kaneko T."/>
            <person name="Kotani H."/>
            <person name="Nakamura Y."/>
            <person name="Asamizu E."/>
            <person name="Miyajima N."/>
            <person name="Tabata S."/>
        </authorList>
    </citation>
    <scope>NUCLEOTIDE SEQUENCE [LARGE SCALE GENOMIC DNA]</scope>
    <source>
        <strain>cv. Columbia</strain>
    </source>
</reference>
<reference key="2">
    <citation type="journal article" date="2017" name="Plant J.">
        <title>Araport11: a complete reannotation of the Arabidopsis thaliana reference genome.</title>
        <authorList>
            <person name="Cheng C.Y."/>
            <person name="Krishnakumar V."/>
            <person name="Chan A.P."/>
            <person name="Thibaud-Nissen F."/>
            <person name="Schobel S."/>
            <person name="Town C.D."/>
        </authorList>
    </citation>
    <scope>GENOME REANNOTATION</scope>
    <source>
        <strain>cv. Columbia</strain>
    </source>
</reference>
<reference key="3">
    <citation type="journal article" date="2000" name="Plant Mol. Biol.">
        <title>In Arabidopsis thaliana, 1% of the genome codes for a novel protein family unique to plants.</title>
        <authorList>
            <person name="Aubourg S."/>
            <person name="Boudet N."/>
            <person name="Kreis M."/>
            <person name="Lecharny A."/>
        </authorList>
    </citation>
    <scope>GENE FAMILY</scope>
</reference>
<reference key="4">
    <citation type="journal article" date="2004" name="Plant Cell">
        <title>Genome-wide analysis of Arabidopsis pentatricopeptide repeat proteins reveals their essential role in organelle biogenesis.</title>
        <authorList>
            <person name="Lurin C."/>
            <person name="Andres C."/>
            <person name="Aubourg S."/>
            <person name="Bellaoui M."/>
            <person name="Bitton F."/>
            <person name="Bruyere C."/>
            <person name="Caboche M."/>
            <person name="Debast C."/>
            <person name="Gualberto J."/>
            <person name="Hoffmann B."/>
            <person name="Lecharny A."/>
            <person name="Le Ret M."/>
            <person name="Martin-Magniette M.-L."/>
            <person name="Mireau H."/>
            <person name="Peeters N."/>
            <person name="Renou J.-P."/>
            <person name="Szurek B."/>
            <person name="Taconnat L."/>
            <person name="Small I."/>
        </authorList>
    </citation>
    <scope>GENE FAMILY</scope>
</reference>
<feature type="chain" id="PRO_0000363542" description="Pentatricopeptide repeat-containing protein At5g39350">
    <location>
        <begin position="1"/>
        <end position="677"/>
    </location>
</feature>
<feature type="repeat" description="PPR 1">
    <location>
        <begin position="48"/>
        <end position="78"/>
    </location>
</feature>
<feature type="repeat" description="PPR 2">
    <location>
        <begin position="79"/>
        <end position="113"/>
    </location>
</feature>
<feature type="repeat" description="PPR 3">
    <location>
        <begin position="116"/>
        <end position="146"/>
    </location>
</feature>
<feature type="repeat" description="PPR 4">
    <location>
        <begin position="151"/>
        <end position="181"/>
    </location>
</feature>
<feature type="repeat" description="PPR 5">
    <location>
        <begin position="182"/>
        <end position="216"/>
    </location>
</feature>
<feature type="repeat" description="PPR 6">
    <location>
        <begin position="217"/>
        <end position="251"/>
    </location>
</feature>
<feature type="repeat" description="PPR 7">
    <location>
        <begin position="252"/>
        <end position="282"/>
    </location>
</feature>
<feature type="repeat" description="PPR 8">
    <location>
        <begin position="283"/>
        <end position="317"/>
    </location>
</feature>
<feature type="repeat" description="PPR 9">
    <location>
        <begin position="318"/>
        <end position="352"/>
    </location>
</feature>
<feature type="repeat" description="PPR 10">
    <location>
        <begin position="353"/>
        <end position="383"/>
    </location>
</feature>
<feature type="repeat" description="PPR 11">
    <location>
        <begin position="384"/>
        <end position="418"/>
    </location>
</feature>
<feature type="repeat" description="PPR 12">
    <location>
        <begin position="419"/>
        <end position="453"/>
    </location>
</feature>
<feature type="repeat" description="PPR 13">
    <location>
        <begin position="454"/>
        <end position="488"/>
    </location>
</feature>
<feature type="repeat" description="PPR 14">
    <location>
        <begin position="489"/>
        <end position="523"/>
    </location>
</feature>
<feature type="repeat" description="PPR 15">
    <location>
        <begin position="524"/>
        <end position="554"/>
    </location>
</feature>
<feature type="repeat" description="PPR 16">
    <location>
        <begin position="560"/>
        <end position="590"/>
    </location>
</feature>
<feature type="region of interest" description="Type E motif">
    <location>
        <begin position="595"/>
        <end position="670"/>
    </location>
</feature>
<keyword id="KW-1185">Reference proteome</keyword>
<keyword id="KW-0677">Repeat</keyword>
<dbReference type="EMBL" id="AB009054">
    <property type="protein sequence ID" value="BAB11009.1"/>
    <property type="molecule type" value="Genomic_DNA"/>
</dbReference>
<dbReference type="EMBL" id="CP002688">
    <property type="protein sequence ID" value="AED94423.1"/>
    <property type="molecule type" value="Genomic_DNA"/>
</dbReference>
<dbReference type="RefSeq" id="NP_198751.1">
    <property type="nucleotide sequence ID" value="NM_123297.2"/>
</dbReference>
<dbReference type="SMR" id="Q9FLZ9"/>
<dbReference type="FunCoup" id="Q9FLZ9">
    <property type="interactions" value="13"/>
</dbReference>
<dbReference type="STRING" id="3702.Q9FLZ9"/>
<dbReference type="PaxDb" id="3702-AT5G39350.1"/>
<dbReference type="ProteomicsDB" id="249286"/>
<dbReference type="EnsemblPlants" id="AT5G39350.1">
    <property type="protein sequence ID" value="AT5G39350.1"/>
    <property type="gene ID" value="AT5G39350"/>
</dbReference>
<dbReference type="GeneID" id="833931"/>
<dbReference type="Gramene" id="AT5G39350.1">
    <property type="protein sequence ID" value="AT5G39350.1"/>
    <property type="gene ID" value="AT5G39350"/>
</dbReference>
<dbReference type="KEGG" id="ath:AT5G39350"/>
<dbReference type="Araport" id="AT5G39350"/>
<dbReference type="TAIR" id="AT5G39350"/>
<dbReference type="eggNOG" id="KOG4197">
    <property type="taxonomic scope" value="Eukaryota"/>
</dbReference>
<dbReference type="HOGENOM" id="CLU_002706_0_1_1"/>
<dbReference type="InParanoid" id="Q9FLZ9"/>
<dbReference type="OMA" id="SGKHAKC"/>
<dbReference type="OrthoDB" id="185373at2759"/>
<dbReference type="PhylomeDB" id="Q9FLZ9"/>
<dbReference type="PRO" id="PR:Q9FLZ9"/>
<dbReference type="Proteomes" id="UP000006548">
    <property type="component" value="Chromosome 5"/>
</dbReference>
<dbReference type="ExpressionAtlas" id="Q9FLZ9">
    <property type="expression patterns" value="baseline and differential"/>
</dbReference>
<dbReference type="GO" id="GO:0003723">
    <property type="term" value="F:RNA binding"/>
    <property type="evidence" value="ECO:0007669"/>
    <property type="project" value="InterPro"/>
</dbReference>
<dbReference type="GO" id="GO:0009451">
    <property type="term" value="P:RNA modification"/>
    <property type="evidence" value="ECO:0007669"/>
    <property type="project" value="InterPro"/>
</dbReference>
<dbReference type="FunFam" id="1.25.40.10:FF:000954">
    <property type="entry name" value="LOW protein: PPR containing-like protein"/>
    <property type="match status" value="1"/>
</dbReference>
<dbReference type="FunFam" id="1.25.40.10:FF:000212">
    <property type="entry name" value="Pentatricopeptide repeat-containing protein At2g03380, mitochondrial"/>
    <property type="match status" value="1"/>
</dbReference>
<dbReference type="FunFam" id="1.25.40.10:FF:001320">
    <property type="entry name" value="Pentatricopeptide repeat-containing protein At5g39350"/>
    <property type="match status" value="1"/>
</dbReference>
<dbReference type="FunFam" id="1.25.40.10:FF:000436">
    <property type="entry name" value="Pentatricopeptide repeat-containing protein At5g39350 family"/>
    <property type="match status" value="1"/>
</dbReference>
<dbReference type="FunFam" id="1.25.40.10:FF:001571">
    <property type="entry name" value="Pentatricopeptide repeat-containing protein, chloroplastic"/>
    <property type="match status" value="1"/>
</dbReference>
<dbReference type="Gene3D" id="1.25.40.10">
    <property type="entry name" value="Tetratricopeptide repeat domain"/>
    <property type="match status" value="5"/>
</dbReference>
<dbReference type="InterPro" id="IPR046848">
    <property type="entry name" value="E_motif"/>
</dbReference>
<dbReference type="InterPro" id="IPR002885">
    <property type="entry name" value="Pentatricopeptide_rpt"/>
</dbReference>
<dbReference type="InterPro" id="IPR046960">
    <property type="entry name" value="PPR_At4g14850-like_plant"/>
</dbReference>
<dbReference type="InterPro" id="IPR011990">
    <property type="entry name" value="TPR-like_helical_dom_sf"/>
</dbReference>
<dbReference type="NCBIfam" id="TIGR00756">
    <property type="entry name" value="PPR"/>
    <property type="match status" value="6"/>
</dbReference>
<dbReference type="PANTHER" id="PTHR47926">
    <property type="entry name" value="PENTATRICOPEPTIDE REPEAT-CONTAINING PROTEIN"/>
    <property type="match status" value="1"/>
</dbReference>
<dbReference type="PANTHER" id="PTHR47926:SF493">
    <property type="entry name" value="PENTATRICOPEPTIDE REPEAT-CONTAINING PROTEIN"/>
    <property type="match status" value="1"/>
</dbReference>
<dbReference type="Pfam" id="PF20431">
    <property type="entry name" value="E_motif"/>
    <property type="match status" value="1"/>
</dbReference>
<dbReference type="Pfam" id="PF01535">
    <property type="entry name" value="PPR"/>
    <property type="match status" value="3"/>
</dbReference>
<dbReference type="Pfam" id="PF13041">
    <property type="entry name" value="PPR_2"/>
    <property type="match status" value="4"/>
</dbReference>
<dbReference type="SUPFAM" id="SSF48452">
    <property type="entry name" value="TPR-like"/>
    <property type="match status" value="2"/>
</dbReference>
<dbReference type="PROSITE" id="PS51375">
    <property type="entry name" value="PPR"/>
    <property type="match status" value="15"/>
</dbReference>
<organism>
    <name type="scientific">Arabidopsis thaliana</name>
    <name type="common">Mouse-ear cress</name>
    <dbReference type="NCBI Taxonomy" id="3702"/>
    <lineage>
        <taxon>Eukaryota</taxon>
        <taxon>Viridiplantae</taxon>
        <taxon>Streptophyta</taxon>
        <taxon>Embryophyta</taxon>
        <taxon>Tracheophyta</taxon>
        <taxon>Spermatophyta</taxon>
        <taxon>Magnoliopsida</taxon>
        <taxon>eudicotyledons</taxon>
        <taxon>Gunneridae</taxon>
        <taxon>Pentapetalae</taxon>
        <taxon>rosids</taxon>
        <taxon>malvids</taxon>
        <taxon>Brassicales</taxon>
        <taxon>Brassicaceae</taxon>
        <taxon>Camelineae</taxon>
        <taxon>Arabidopsis</taxon>
    </lineage>
</organism>
<accession>Q9FLZ9</accession>
<comment type="similarity">
    <text evidence="1">Belongs to the PPR family. PCMP-E subfamily.</text>
</comment>
<comment type="online information" name="Pentatricopeptide repeat proteins">
    <link uri="https://ppr.plantenergy.uwa.edu.au"/>
</comment>
<protein>
    <recommendedName>
        <fullName>Pentatricopeptide repeat-containing protein At5g39350</fullName>
    </recommendedName>
</protein>
<name>PP405_ARATH</name>